<keyword id="KW-0963">Cytoplasm</keyword>
<keyword id="KW-0328">Glycosyltransferase</keyword>
<keyword id="KW-0660">Purine salvage</keyword>
<keyword id="KW-1185">Reference proteome</keyword>
<keyword id="KW-0808">Transferase</keyword>
<evidence type="ECO:0000255" key="1">
    <source>
        <dbReference type="HAMAP-Rule" id="MF_00004"/>
    </source>
</evidence>
<feature type="chain" id="PRO_0000149359" description="Adenine phosphoribosyltransferase">
    <location>
        <begin position="1"/>
        <end position="176"/>
    </location>
</feature>
<dbReference type="EC" id="2.4.2.7" evidence="1"/>
<dbReference type="EMBL" id="AE000783">
    <property type="protein sequence ID" value="AAC67130.1"/>
    <property type="molecule type" value="Genomic_DNA"/>
</dbReference>
<dbReference type="PIR" id="H70196">
    <property type="entry name" value="H70196"/>
</dbReference>
<dbReference type="RefSeq" id="NP_212911.1">
    <property type="nucleotide sequence ID" value="NC_001318.1"/>
</dbReference>
<dbReference type="RefSeq" id="WP_002656149.1">
    <property type="nucleotide sequence ID" value="NC_001318.1"/>
</dbReference>
<dbReference type="SMR" id="O51718"/>
<dbReference type="STRING" id="224326.BB_0777"/>
<dbReference type="PaxDb" id="224326-BB_0777"/>
<dbReference type="EnsemblBacteria" id="AAC67130">
    <property type="protein sequence ID" value="AAC67130"/>
    <property type="gene ID" value="BB_0777"/>
</dbReference>
<dbReference type="KEGG" id="bbu:BB_0777"/>
<dbReference type="PATRIC" id="fig|224326.49.peg.1169"/>
<dbReference type="HOGENOM" id="CLU_063339_3_3_12"/>
<dbReference type="OrthoDB" id="9803963at2"/>
<dbReference type="UniPathway" id="UPA00588">
    <property type="reaction ID" value="UER00646"/>
</dbReference>
<dbReference type="Proteomes" id="UP000001807">
    <property type="component" value="Chromosome"/>
</dbReference>
<dbReference type="GO" id="GO:0005737">
    <property type="term" value="C:cytoplasm"/>
    <property type="evidence" value="ECO:0007669"/>
    <property type="project" value="UniProtKB-SubCell"/>
</dbReference>
<dbReference type="GO" id="GO:0002055">
    <property type="term" value="F:adenine binding"/>
    <property type="evidence" value="ECO:0007669"/>
    <property type="project" value="TreeGrafter"/>
</dbReference>
<dbReference type="GO" id="GO:0003999">
    <property type="term" value="F:adenine phosphoribosyltransferase activity"/>
    <property type="evidence" value="ECO:0007669"/>
    <property type="project" value="UniProtKB-UniRule"/>
</dbReference>
<dbReference type="GO" id="GO:0016208">
    <property type="term" value="F:AMP binding"/>
    <property type="evidence" value="ECO:0007669"/>
    <property type="project" value="TreeGrafter"/>
</dbReference>
<dbReference type="GO" id="GO:0006168">
    <property type="term" value="P:adenine salvage"/>
    <property type="evidence" value="ECO:0007669"/>
    <property type="project" value="InterPro"/>
</dbReference>
<dbReference type="GO" id="GO:0044209">
    <property type="term" value="P:AMP salvage"/>
    <property type="evidence" value="ECO:0007669"/>
    <property type="project" value="UniProtKB-UniRule"/>
</dbReference>
<dbReference type="GO" id="GO:0006166">
    <property type="term" value="P:purine ribonucleoside salvage"/>
    <property type="evidence" value="ECO:0007669"/>
    <property type="project" value="UniProtKB-KW"/>
</dbReference>
<dbReference type="CDD" id="cd06223">
    <property type="entry name" value="PRTases_typeI"/>
    <property type="match status" value="1"/>
</dbReference>
<dbReference type="FunFam" id="3.40.50.2020:FF:000004">
    <property type="entry name" value="Adenine phosphoribosyltransferase"/>
    <property type="match status" value="1"/>
</dbReference>
<dbReference type="Gene3D" id="3.40.50.2020">
    <property type="match status" value="1"/>
</dbReference>
<dbReference type="HAMAP" id="MF_00004">
    <property type="entry name" value="Aden_phosphoribosyltr"/>
    <property type="match status" value="1"/>
</dbReference>
<dbReference type="InterPro" id="IPR005764">
    <property type="entry name" value="Ade_phspho_trans"/>
</dbReference>
<dbReference type="InterPro" id="IPR000836">
    <property type="entry name" value="PRibTrfase_dom"/>
</dbReference>
<dbReference type="InterPro" id="IPR029057">
    <property type="entry name" value="PRTase-like"/>
</dbReference>
<dbReference type="InterPro" id="IPR050054">
    <property type="entry name" value="UPRTase/APRTase"/>
</dbReference>
<dbReference type="NCBIfam" id="NF002636">
    <property type="entry name" value="PRK02304.1-5"/>
    <property type="match status" value="1"/>
</dbReference>
<dbReference type="PANTHER" id="PTHR32315">
    <property type="entry name" value="ADENINE PHOSPHORIBOSYLTRANSFERASE"/>
    <property type="match status" value="1"/>
</dbReference>
<dbReference type="PANTHER" id="PTHR32315:SF3">
    <property type="entry name" value="ADENINE PHOSPHORIBOSYLTRANSFERASE"/>
    <property type="match status" value="1"/>
</dbReference>
<dbReference type="Pfam" id="PF00156">
    <property type="entry name" value="Pribosyltran"/>
    <property type="match status" value="1"/>
</dbReference>
<dbReference type="SUPFAM" id="SSF53271">
    <property type="entry name" value="PRTase-like"/>
    <property type="match status" value="1"/>
</dbReference>
<dbReference type="PROSITE" id="PS00103">
    <property type="entry name" value="PUR_PYR_PR_TRANSFER"/>
    <property type="match status" value="1"/>
</dbReference>
<protein>
    <recommendedName>
        <fullName evidence="1">Adenine phosphoribosyltransferase</fullName>
        <shortName evidence="1">APRT</shortName>
        <ecNumber evidence="1">2.4.2.7</ecNumber>
    </recommendedName>
</protein>
<gene>
    <name evidence="1" type="primary">apt</name>
    <name type="ordered locus">BB_0777</name>
</gene>
<sequence>MKNKTEYYDQFISKIPNFPKKGVLFYDITSVLLKPEVYSSLINEVYSFYNFKKIDCIAVVESRGYLIGAPLSLKMQLPLVLIRKEGKLPREVFSEEYELEYGFGRIEVHKDDVRTYSNILLIDDILATGGTLKSSAILLERAGGKVKDIFCFIELCAINGRQSLESYEVNSLVRYN</sequence>
<organism>
    <name type="scientific">Borreliella burgdorferi (strain ATCC 35210 / DSM 4680 / CIP 102532 / B31)</name>
    <name type="common">Borrelia burgdorferi</name>
    <dbReference type="NCBI Taxonomy" id="224326"/>
    <lineage>
        <taxon>Bacteria</taxon>
        <taxon>Pseudomonadati</taxon>
        <taxon>Spirochaetota</taxon>
        <taxon>Spirochaetia</taxon>
        <taxon>Spirochaetales</taxon>
        <taxon>Borreliaceae</taxon>
        <taxon>Borreliella</taxon>
    </lineage>
</organism>
<comment type="function">
    <text evidence="1">Catalyzes a salvage reaction resulting in the formation of AMP, that is energically less costly than de novo synthesis.</text>
</comment>
<comment type="catalytic activity">
    <reaction evidence="1">
        <text>AMP + diphosphate = 5-phospho-alpha-D-ribose 1-diphosphate + adenine</text>
        <dbReference type="Rhea" id="RHEA:16609"/>
        <dbReference type="ChEBI" id="CHEBI:16708"/>
        <dbReference type="ChEBI" id="CHEBI:33019"/>
        <dbReference type="ChEBI" id="CHEBI:58017"/>
        <dbReference type="ChEBI" id="CHEBI:456215"/>
        <dbReference type="EC" id="2.4.2.7"/>
    </reaction>
</comment>
<comment type="pathway">
    <text evidence="1">Purine metabolism; AMP biosynthesis via salvage pathway; AMP from adenine: step 1/1.</text>
</comment>
<comment type="subunit">
    <text evidence="1">Homodimer.</text>
</comment>
<comment type="subcellular location">
    <subcellularLocation>
        <location evidence="1">Cytoplasm</location>
    </subcellularLocation>
</comment>
<comment type="similarity">
    <text evidence="1">Belongs to the purine/pyrimidine phosphoribosyltransferase family.</text>
</comment>
<accession>O51718</accession>
<proteinExistence type="inferred from homology"/>
<reference key="1">
    <citation type="journal article" date="1997" name="Nature">
        <title>Genomic sequence of a Lyme disease spirochaete, Borrelia burgdorferi.</title>
        <authorList>
            <person name="Fraser C.M."/>
            <person name="Casjens S."/>
            <person name="Huang W.M."/>
            <person name="Sutton G.G."/>
            <person name="Clayton R.A."/>
            <person name="Lathigra R."/>
            <person name="White O."/>
            <person name="Ketchum K.A."/>
            <person name="Dodson R.J."/>
            <person name="Hickey E.K."/>
            <person name="Gwinn M.L."/>
            <person name="Dougherty B.A."/>
            <person name="Tomb J.-F."/>
            <person name="Fleischmann R.D."/>
            <person name="Richardson D.L."/>
            <person name="Peterson J.D."/>
            <person name="Kerlavage A.R."/>
            <person name="Quackenbush J."/>
            <person name="Salzberg S.L."/>
            <person name="Hanson M."/>
            <person name="van Vugt R."/>
            <person name="Palmer N."/>
            <person name="Adams M.D."/>
            <person name="Gocayne J.D."/>
            <person name="Weidman J.F."/>
            <person name="Utterback T.R."/>
            <person name="Watthey L."/>
            <person name="McDonald L.A."/>
            <person name="Artiach P."/>
            <person name="Bowman C."/>
            <person name="Garland S.A."/>
            <person name="Fujii C."/>
            <person name="Cotton M.D."/>
            <person name="Horst K."/>
            <person name="Roberts K.M."/>
            <person name="Hatch B."/>
            <person name="Smith H.O."/>
            <person name="Venter J.C."/>
        </authorList>
    </citation>
    <scope>NUCLEOTIDE SEQUENCE [LARGE SCALE GENOMIC DNA]</scope>
    <source>
        <strain>ATCC 35210 / DSM 4680 / CIP 102532 / B31</strain>
    </source>
</reference>
<name>APT_BORBU</name>